<feature type="chain" id="PRO_0000057160" description="Non-secretory ribonuclease">
    <location>
        <begin position="1"/>
        <end position="20" status="greater than"/>
    </location>
</feature>
<feature type="active site" description="Proton acceptor" evidence="1">
    <location>
        <position position="16"/>
    </location>
</feature>
<feature type="non-terminal residue">
    <location>
        <position position="20"/>
    </location>
</feature>
<evidence type="ECO:0000250" key="1"/>
<evidence type="ECO:0000250" key="2">
    <source>
        <dbReference type="UniProtKB" id="P47784"/>
    </source>
</evidence>
<evidence type="ECO:0000269" key="3">
    <source>
    </source>
</evidence>
<evidence type="ECO:0000305" key="4"/>
<evidence type="ECO:0000305" key="5">
    <source>
    </source>
</evidence>
<dbReference type="EC" id="4.6.1.18" evidence="2"/>
<dbReference type="STRING" id="9823.ENSSSCP00000042094"/>
<dbReference type="InParanoid" id="P80551"/>
<dbReference type="Proteomes" id="UP000008227">
    <property type="component" value="Unplaced"/>
</dbReference>
<dbReference type="Proteomes" id="UP000314985">
    <property type="component" value="Unplaced"/>
</dbReference>
<dbReference type="Proteomes" id="UP000694570">
    <property type="component" value="Unplaced"/>
</dbReference>
<dbReference type="Proteomes" id="UP000694571">
    <property type="component" value="Unplaced"/>
</dbReference>
<dbReference type="Proteomes" id="UP000694720">
    <property type="component" value="Unplaced"/>
</dbReference>
<dbReference type="Proteomes" id="UP000694722">
    <property type="component" value="Unplaced"/>
</dbReference>
<dbReference type="Proteomes" id="UP000694723">
    <property type="component" value="Unplaced"/>
</dbReference>
<dbReference type="Proteomes" id="UP000694724">
    <property type="component" value="Unplaced"/>
</dbReference>
<dbReference type="Proteomes" id="UP000694725">
    <property type="component" value="Unplaced"/>
</dbReference>
<dbReference type="Proteomes" id="UP000694726">
    <property type="component" value="Unplaced"/>
</dbReference>
<dbReference type="Proteomes" id="UP000694727">
    <property type="component" value="Unplaced"/>
</dbReference>
<dbReference type="Proteomes" id="UP000694728">
    <property type="component" value="Unplaced"/>
</dbReference>
<dbReference type="GO" id="GO:0005764">
    <property type="term" value="C:lysosome"/>
    <property type="evidence" value="ECO:0007669"/>
    <property type="project" value="UniProtKB-SubCell"/>
</dbReference>
<dbReference type="GO" id="GO:0016829">
    <property type="term" value="F:lyase activity"/>
    <property type="evidence" value="ECO:0007669"/>
    <property type="project" value="UniProtKB-KW"/>
</dbReference>
<dbReference type="GO" id="GO:0004522">
    <property type="term" value="F:ribonuclease A activity"/>
    <property type="evidence" value="ECO:0007669"/>
    <property type="project" value="UniProtKB-EC"/>
</dbReference>
<gene>
    <name type="primary">RNASE2</name>
</gene>
<proteinExistence type="evidence at protein level"/>
<keyword id="KW-0903">Direct protein sequencing</keyword>
<keyword id="KW-0255">Endonuclease</keyword>
<keyword id="KW-0378">Hydrolase</keyword>
<keyword id="KW-0456">Lyase</keyword>
<keyword id="KW-0458">Lysosome</keyword>
<keyword id="KW-0540">Nuclease</keyword>
<keyword id="KW-1185">Reference proteome</keyword>
<name>RNAS2_PIG</name>
<protein>
    <recommendedName>
        <fullName>Non-secretory ribonuclease</fullName>
        <ecNumber evidence="2">4.6.1.18</ecNumber>
    </recommendedName>
    <alternativeName>
        <fullName>Eosinophil-derived neurotoxin</fullName>
    </alternativeName>
</protein>
<organism>
    <name type="scientific">Sus scrofa</name>
    <name type="common">Pig</name>
    <dbReference type="NCBI Taxonomy" id="9823"/>
    <lineage>
        <taxon>Eukaryota</taxon>
        <taxon>Metazoa</taxon>
        <taxon>Chordata</taxon>
        <taxon>Craniata</taxon>
        <taxon>Vertebrata</taxon>
        <taxon>Euteleostomi</taxon>
        <taxon>Mammalia</taxon>
        <taxon>Eutheria</taxon>
        <taxon>Laurasiatheria</taxon>
        <taxon>Artiodactyla</taxon>
        <taxon>Suina</taxon>
        <taxon>Suidae</taxon>
        <taxon>Sus</taxon>
    </lineage>
</organism>
<accession>P80551</accession>
<reference key="1">
    <citation type="journal article" date="1996" name="Int. Arch. Allergy Immunol.">
        <title>Isolation and characterization of porcine cationic eosinophil granule proteins.</title>
        <authorList>
            <person name="Fornhem C."/>
            <person name="Peterson C.G.B."/>
            <person name="Alving K."/>
        </authorList>
    </citation>
    <scope>PROTEIN SEQUENCE</scope>
    <scope>SUBCELLULAR LOCATION</scope>
</reference>
<sequence length="20" mass="2145">VPPGGLTXAQXFTIQHIXMT</sequence>
<comment type="function">
    <text evidence="1">This is a non-secretory ribonuclease. It is a pyrimidine specific nuclease with a slight preference for U. Cytotoxin and helminthotoxin. Possesses a wide variety of biological activities (By similarity).</text>
</comment>
<comment type="catalytic activity">
    <reaction evidence="2">
        <text>an [RNA] containing cytidine + H2O = an [RNA]-3'-cytidine-3'-phosphate + a 5'-hydroxy-ribonucleotide-3'-[RNA].</text>
        <dbReference type="EC" id="4.6.1.18"/>
    </reaction>
</comment>
<comment type="catalytic activity">
    <reaction evidence="2">
        <text>an [RNA] containing uridine + H2O = an [RNA]-3'-uridine-3'-phosphate + a 5'-hydroxy-ribonucleotide-3'-[RNA].</text>
        <dbReference type="EC" id="4.6.1.18"/>
    </reaction>
</comment>
<comment type="subunit">
    <text evidence="1">Interacts with and forms a tight 1:1 complex with RNH1. Dimerization of two such complexes may occur (By similarity).</text>
</comment>
<comment type="subcellular location">
    <subcellularLocation>
        <location evidence="5">Lysosome</location>
    </subcellularLocation>
    <subcellularLocation>
        <location evidence="3">Cytoplasmic granule</location>
    </subcellularLocation>
    <text>Matrix of eosinophil's large specific granule.</text>
</comment>
<comment type="similarity">
    <text evidence="4">Belongs to the pancreatic ribonuclease family.</text>
</comment>